<name>PELB_ASPOR</name>
<organism>
    <name type="scientific">Aspergillus oryzae (strain ATCC 42149 / RIB 40)</name>
    <name type="common">Yellow koji mold</name>
    <dbReference type="NCBI Taxonomy" id="510516"/>
    <lineage>
        <taxon>Eukaryota</taxon>
        <taxon>Fungi</taxon>
        <taxon>Dikarya</taxon>
        <taxon>Ascomycota</taxon>
        <taxon>Pezizomycotina</taxon>
        <taxon>Eurotiomycetes</taxon>
        <taxon>Eurotiomycetidae</taxon>
        <taxon>Eurotiales</taxon>
        <taxon>Aspergillaceae</taxon>
        <taxon>Aspergillus</taxon>
        <taxon>Aspergillus subgen. Circumdati</taxon>
    </lineage>
</organism>
<proteinExistence type="evidence at transcript level"/>
<reference key="1">
    <citation type="journal article" date="2001" name="Biosci. Biotechnol. Biochem.">
        <title>Sequence analysis and overexpression of a pectin lyase gene (pel1) from Aspergillus oryzae KBN616.</title>
        <authorList>
            <person name="Kitamoto N."/>
            <person name="Yoshino-Yasuda S."/>
            <person name="Ohmiya K."/>
            <person name="Tsukagoshi N."/>
        </authorList>
    </citation>
    <scope>NUCLEOTIDE SEQUENCE [GENOMIC DNA]</scope>
    <scope>FUNCTION</scope>
    <source>
        <strain>KBN616</strain>
    </source>
</reference>
<reference key="2">
    <citation type="journal article" date="2005" name="Nature">
        <title>Genome sequencing and analysis of Aspergillus oryzae.</title>
        <authorList>
            <person name="Machida M."/>
            <person name="Asai K."/>
            <person name="Sano M."/>
            <person name="Tanaka T."/>
            <person name="Kumagai T."/>
            <person name="Terai G."/>
            <person name="Kusumoto K."/>
            <person name="Arima T."/>
            <person name="Akita O."/>
            <person name="Kashiwagi Y."/>
            <person name="Abe K."/>
            <person name="Gomi K."/>
            <person name="Horiuchi H."/>
            <person name="Kitamoto K."/>
            <person name="Kobayashi T."/>
            <person name="Takeuchi M."/>
            <person name="Denning D.W."/>
            <person name="Galagan J.E."/>
            <person name="Nierman W.C."/>
            <person name="Yu J."/>
            <person name="Archer D.B."/>
            <person name="Bennett J.W."/>
            <person name="Bhatnagar D."/>
            <person name="Cleveland T.E."/>
            <person name="Fedorova N.D."/>
            <person name="Gotoh O."/>
            <person name="Horikawa H."/>
            <person name="Hosoyama A."/>
            <person name="Ichinomiya M."/>
            <person name="Igarashi R."/>
            <person name="Iwashita K."/>
            <person name="Juvvadi P.R."/>
            <person name="Kato M."/>
            <person name="Kato Y."/>
            <person name="Kin T."/>
            <person name="Kokubun A."/>
            <person name="Maeda H."/>
            <person name="Maeyama N."/>
            <person name="Maruyama J."/>
            <person name="Nagasaki H."/>
            <person name="Nakajima T."/>
            <person name="Oda K."/>
            <person name="Okada K."/>
            <person name="Paulsen I."/>
            <person name="Sakamoto K."/>
            <person name="Sawano T."/>
            <person name="Takahashi M."/>
            <person name="Takase K."/>
            <person name="Terabayashi Y."/>
            <person name="Wortman J.R."/>
            <person name="Yamada O."/>
            <person name="Yamagata Y."/>
            <person name="Anazawa H."/>
            <person name="Hata Y."/>
            <person name="Koide Y."/>
            <person name="Komori T."/>
            <person name="Koyama Y."/>
            <person name="Minetoki T."/>
            <person name="Suharnan S."/>
            <person name="Tanaka A."/>
            <person name="Isono K."/>
            <person name="Kuhara S."/>
            <person name="Ogasawara N."/>
            <person name="Kikuchi H."/>
        </authorList>
    </citation>
    <scope>NUCLEOTIDE SEQUENCE [LARGE SCALE GENOMIC DNA]</scope>
    <source>
        <strain>ATCC 42149 / RIB 40</strain>
    </source>
</reference>
<reference key="3">
    <citation type="journal article" date="2008" name="Plant Physiol.">
        <title>Restoration of mature etiolated cucumber hypocotyl cell wall susceptibility to expansin by pretreatment with fungal pectinases and EGTA in vitro.</title>
        <authorList>
            <person name="Zhao Q."/>
            <person name="Yuan S."/>
            <person name="Wang X."/>
            <person name="Zhang Y."/>
            <person name="Zhu H."/>
            <person name="Lu C."/>
        </authorList>
    </citation>
    <scope>NUCLEOTIDE SEQUENCE [MRNA] OF 21-381</scope>
    <scope>FUNCTION</scope>
</reference>
<accession>Q2TWM1</accession>
<accession>A4L7H9</accession>
<accession>Q8X1X2</accession>
<protein>
    <recommendedName>
        <fullName>Pectin lyase 1</fullName>
        <shortName>PL1</shortName>
        <ecNumber>4.2.2.10</ecNumber>
    </recommendedName>
    <alternativeName>
        <fullName>Pectin lyase B</fullName>
        <shortName>PLB</shortName>
    </alternativeName>
</protein>
<sequence>MKYASFIAAAAAALASAVSAAGVSGSAEGFAKGVTGGGSATPVYPSTTDELVSYLGDSEARVIILTKTFDFTNTEGTETSSGCAPWGTASGCQLAINKDNWCTNYEPNAPTVSSITYNKAGVLGITVNSNKSIVGQGSAGVIKGRGLRIVSGAKNVIIQNIAITDINPKYVWGGDAITLNEADLVWIDHVTTARIARQHIVLGTQADNRVTISNSLIDGRTDYSATCNGHHYWGVYLDGSNDMVTMMGNYFYYTSGRMPKVQGNTLLHAVNNYFHNIEGHAFEIGSGGYVLAEGNAFQNVDAPVESPISGQLFSAPDATTNEQCKSVFGRACQINAFGSSGSFSQADTAVISKFSGKNIATAHLAQNIPKWVMANAGQGKL</sequence>
<gene>
    <name type="primary">pel1</name>
    <name type="synonym">pelB</name>
    <name type="ORF">AO090010000504</name>
</gene>
<feature type="signal peptide" evidence="2">
    <location>
        <begin position="1"/>
        <end position="20"/>
    </location>
</feature>
<feature type="chain" id="PRO_0000394347" description="Pectin lyase 1">
    <location>
        <begin position="21"/>
        <end position="381"/>
    </location>
</feature>
<feature type="active site" evidence="2">
    <location>
        <position position="257"/>
    </location>
</feature>
<feature type="glycosylation site" description="N-linked (GlcNAc...) asparagine" evidence="2">
    <location>
        <position position="130"/>
    </location>
</feature>
<feature type="disulfide bond" evidence="1">
    <location>
        <begin position="83"/>
        <end position="102"/>
    </location>
</feature>
<feature type="disulfide bond" evidence="1">
    <location>
        <begin position="92"/>
        <end position="227"/>
    </location>
</feature>
<feature type="disulfide bond" evidence="1">
    <location>
        <begin position="324"/>
        <end position="332"/>
    </location>
</feature>
<feature type="sequence conflict" description="In Ref. 1; BAB82467." evidence="5" ref="1">
    <original>S</original>
    <variation>T</variation>
    <location>
        <position position="19"/>
    </location>
</feature>
<feature type="sequence conflict" description="In Ref. 1; BAB82467." evidence="5" ref="1">
    <original>A</original>
    <variation>V</variation>
    <location>
        <position position="374"/>
    </location>
</feature>
<comment type="function">
    <text evidence="3 4">Pectinolytic enzymes consist of four classes of enzymes: pectin lyase, polygalacturonase, pectin methylesterase and rhamnogalacturonase. Among pectinolytic enzymes, pectin lyase is the most important in depolymerization of pectin, since it cleaves internal glycosidic bonds of highly methylated pectins.</text>
</comment>
<comment type="catalytic activity">
    <reaction>
        <text>Eliminative cleavage of (1-&gt;4)-alpha-D-galacturonan methyl ester to give oligosaccharides with 4-deoxy-6-O-methyl-alpha-D-galact-4-enuronosyl groups at their non-reducing ends.</text>
        <dbReference type="EC" id="4.2.2.10"/>
    </reaction>
</comment>
<comment type="subcellular location">
    <subcellularLocation>
        <location evidence="5">Secreted</location>
    </subcellularLocation>
</comment>
<comment type="similarity">
    <text evidence="5">Belongs to the polysaccharide lyase 1 family.</text>
</comment>
<evidence type="ECO:0000250" key="1"/>
<evidence type="ECO:0000255" key="2"/>
<evidence type="ECO:0000269" key="3">
    <source>
    </source>
</evidence>
<evidence type="ECO:0000269" key="4">
    <source>
    </source>
</evidence>
<evidence type="ECO:0000305" key="5"/>
<keyword id="KW-0119">Carbohydrate metabolism</keyword>
<keyword id="KW-0961">Cell wall biogenesis/degradation</keyword>
<keyword id="KW-1015">Disulfide bond</keyword>
<keyword id="KW-0325">Glycoprotein</keyword>
<keyword id="KW-0456">Lyase</keyword>
<keyword id="KW-0624">Polysaccharide degradation</keyword>
<keyword id="KW-1185">Reference proteome</keyword>
<keyword id="KW-0964">Secreted</keyword>
<keyword id="KW-0732">Signal</keyword>
<dbReference type="EC" id="4.2.2.10"/>
<dbReference type="EMBL" id="AB029322">
    <property type="protein sequence ID" value="BAB82467.1"/>
    <property type="molecule type" value="Genomic_DNA"/>
</dbReference>
<dbReference type="EMBL" id="BA000056">
    <property type="protein sequence ID" value="BAE66352.1"/>
    <property type="molecule type" value="Genomic_DNA"/>
</dbReference>
<dbReference type="EMBL" id="EF452419">
    <property type="protein sequence ID" value="ABO38857.1"/>
    <property type="molecule type" value="mRNA"/>
</dbReference>
<dbReference type="PIR" id="JC7650">
    <property type="entry name" value="JC7650"/>
</dbReference>
<dbReference type="RefSeq" id="XP_001827485.1">
    <property type="nucleotide sequence ID" value="XM_001827433.1"/>
</dbReference>
<dbReference type="SMR" id="Q2TWM1"/>
<dbReference type="STRING" id="510516.Q2TWM1"/>
<dbReference type="CAZy" id="PL1">
    <property type="family name" value="Polysaccharide Lyase Family 1"/>
</dbReference>
<dbReference type="GlyCosmos" id="Q2TWM1">
    <property type="glycosylation" value="1 site, No reported glycans"/>
</dbReference>
<dbReference type="EnsemblFungi" id="BAE66352">
    <property type="protein sequence ID" value="BAE66352"/>
    <property type="gene ID" value="AO090010000504"/>
</dbReference>
<dbReference type="GeneID" id="5999619"/>
<dbReference type="KEGG" id="aor:AO090010000504"/>
<dbReference type="VEuPathDB" id="FungiDB:AO090010000504"/>
<dbReference type="HOGENOM" id="CLU_021980_0_1_1"/>
<dbReference type="OMA" id="RACLAKN"/>
<dbReference type="OrthoDB" id="88760at5052"/>
<dbReference type="Proteomes" id="UP000006564">
    <property type="component" value="Chromosome 8"/>
</dbReference>
<dbReference type="GO" id="GO:0005576">
    <property type="term" value="C:extracellular region"/>
    <property type="evidence" value="ECO:0000314"/>
    <property type="project" value="AspGD"/>
</dbReference>
<dbReference type="GO" id="GO:0030570">
    <property type="term" value="F:pectate lyase activity"/>
    <property type="evidence" value="ECO:0007669"/>
    <property type="project" value="InterPro"/>
</dbReference>
<dbReference type="GO" id="GO:0047490">
    <property type="term" value="F:pectin lyase activity"/>
    <property type="evidence" value="ECO:0000314"/>
    <property type="project" value="UniProtKB"/>
</dbReference>
<dbReference type="GO" id="GO:0071555">
    <property type="term" value="P:cell wall organization"/>
    <property type="evidence" value="ECO:0007669"/>
    <property type="project" value="UniProtKB-KW"/>
</dbReference>
<dbReference type="GO" id="GO:0045490">
    <property type="term" value="P:pectin catabolic process"/>
    <property type="evidence" value="ECO:0000314"/>
    <property type="project" value="UniProtKB"/>
</dbReference>
<dbReference type="FunFam" id="2.160.20.10:FF:000003">
    <property type="entry name" value="Pectin lyase F"/>
    <property type="match status" value="1"/>
</dbReference>
<dbReference type="Gene3D" id="2.160.20.10">
    <property type="entry name" value="Single-stranded right-handed beta-helix, Pectin lyase-like"/>
    <property type="match status" value="1"/>
</dbReference>
<dbReference type="InterPro" id="IPR002022">
    <property type="entry name" value="Pec_lyase"/>
</dbReference>
<dbReference type="InterPro" id="IPR012334">
    <property type="entry name" value="Pectin_lyas_fold"/>
</dbReference>
<dbReference type="InterPro" id="IPR011050">
    <property type="entry name" value="Pectin_lyase_fold/virulence"/>
</dbReference>
<dbReference type="InterPro" id="IPR045032">
    <property type="entry name" value="PEL"/>
</dbReference>
<dbReference type="PANTHER" id="PTHR31683">
    <property type="entry name" value="PECTATE LYASE 18-RELATED"/>
    <property type="match status" value="1"/>
</dbReference>
<dbReference type="PANTHER" id="PTHR31683:SF16">
    <property type="entry name" value="PECTIN LYASE A-RELATED"/>
    <property type="match status" value="1"/>
</dbReference>
<dbReference type="Pfam" id="PF00544">
    <property type="entry name" value="Pectate_lyase_4"/>
    <property type="match status" value="1"/>
</dbReference>
<dbReference type="SMART" id="SM00656">
    <property type="entry name" value="Amb_all"/>
    <property type="match status" value="1"/>
</dbReference>
<dbReference type="SUPFAM" id="SSF51126">
    <property type="entry name" value="Pectin lyase-like"/>
    <property type="match status" value="1"/>
</dbReference>